<organism>
    <name type="scientific">Staphylococcus aureus (strain N315)</name>
    <dbReference type="NCBI Taxonomy" id="158879"/>
    <lineage>
        <taxon>Bacteria</taxon>
        <taxon>Bacillati</taxon>
        <taxon>Bacillota</taxon>
        <taxon>Bacilli</taxon>
        <taxon>Bacillales</taxon>
        <taxon>Staphylococcaceae</taxon>
        <taxon>Staphylococcus</taxon>
    </lineage>
</organism>
<proteinExistence type="inferred from homology"/>
<accession>Q7A5R7</accession>
<feature type="chain" id="PRO_0000282660" description="Prephenate dehydrogenase">
    <location>
        <begin position="1"/>
        <end position="363"/>
    </location>
</feature>
<feature type="domain" description="Prephenate/arogenate dehydrogenase" evidence="2">
    <location>
        <begin position="2"/>
        <end position="291"/>
    </location>
</feature>
<feature type="domain" description="ACT" evidence="3">
    <location>
        <begin position="296"/>
        <end position="363"/>
    </location>
</feature>
<feature type="binding site" evidence="1">
    <location>
        <begin position="3"/>
        <end position="33"/>
    </location>
    <ligand>
        <name>NAD(+)</name>
        <dbReference type="ChEBI" id="CHEBI:57540"/>
    </ligand>
</feature>
<reference key="1">
    <citation type="journal article" date="2001" name="Lancet">
        <title>Whole genome sequencing of meticillin-resistant Staphylococcus aureus.</title>
        <authorList>
            <person name="Kuroda M."/>
            <person name="Ohta T."/>
            <person name="Uchiyama I."/>
            <person name="Baba T."/>
            <person name="Yuzawa H."/>
            <person name="Kobayashi I."/>
            <person name="Cui L."/>
            <person name="Oguchi A."/>
            <person name="Aoki K."/>
            <person name="Nagai Y."/>
            <person name="Lian J.-Q."/>
            <person name="Ito T."/>
            <person name="Kanamori M."/>
            <person name="Matsumaru H."/>
            <person name="Maruyama A."/>
            <person name="Murakami H."/>
            <person name="Hosoyama A."/>
            <person name="Mizutani-Ui Y."/>
            <person name="Takahashi N.K."/>
            <person name="Sawano T."/>
            <person name="Inoue R."/>
            <person name="Kaito C."/>
            <person name="Sekimizu K."/>
            <person name="Hirakawa H."/>
            <person name="Kuhara S."/>
            <person name="Goto S."/>
            <person name="Yabuzaki J."/>
            <person name="Kanehisa M."/>
            <person name="Yamashita A."/>
            <person name="Oshima K."/>
            <person name="Furuya K."/>
            <person name="Yoshino C."/>
            <person name="Shiba T."/>
            <person name="Hattori M."/>
            <person name="Ogasawara N."/>
            <person name="Hayashi H."/>
            <person name="Hiramatsu K."/>
        </authorList>
    </citation>
    <scope>NUCLEOTIDE SEQUENCE [LARGE SCALE GENOMIC DNA]</scope>
    <source>
        <strain>N315</strain>
    </source>
</reference>
<dbReference type="EC" id="1.3.1.12"/>
<dbReference type="EMBL" id="BA000018">
    <property type="protein sequence ID" value="BAB42457.1"/>
    <property type="molecule type" value="Genomic_DNA"/>
</dbReference>
<dbReference type="PIR" id="E89912">
    <property type="entry name" value="E89912"/>
</dbReference>
<dbReference type="RefSeq" id="WP_000214278.1">
    <property type="nucleotide sequence ID" value="NC_002745.2"/>
</dbReference>
<dbReference type="SMR" id="Q7A5R7"/>
<dbReference type="EnsemblBacteria" id="BAB42457">
    <property type="protein sequence ID" value="BAB42457"/>
    <property type="gene ID" value="BAB42457"/>
</dbReference>
<dbReference type="KEGG" id="sau:SA1197"/>
<dbReference type="HOGENOM" id="CLU_055968_2_1_9"/>
<dbReference type="UniPathway" id="UPA00122">
    <property type="reaction ID" value="UER00961"/>
</dbReference>
<dbReference type="GO" id="GO:0070403">
    <property type="term" value="F:NAD+ binding"/>
    <property type="evidence" value="ECO:0007669"/>
    <property type="project" value="InterPro"/>
</dbReference>
<dbReference type="GO" id="GO:0008977">
    <property type="term" value="F:prephenate dehydrogenase (NAD+) activity"/>
    <property type="evidence" value="ECO:0007669"/>
    <property type="project" value="UniProtKB-EC"/>
</dbReference>
<dbReference type="GO" id="GO:0004665">
    <property type="term" value="F:prephenate dehydrogenase (NADP+) activity"/>
    <property type="evidence" value="ECO:0007669"/>
    <property type="project" value="InterPro"/>
</dbReference>
<dbReference type="GO" id="GO:0006571">
    <property type="term" value="P:tyrosine biosynthetic process"/>
    <property type="evidence" value="ECO:0007669"/>
    <property type="project" value="UniProtKB-UniPathway"/>
</dbReference>
<dbReference type="CDD" id="cd04909">
    <property type="entry name" value="ACT_PDH-BS"/>
    <property type="match status" value="1"/>
</dbReference>
<dbReference type="FunFam" id="1.10.3660.10:FF:000003">
    <property type="entry name" value="Prephenate dehydrogenase"/>
    <property type="match status" value="1"/>
</dbReference>
<dbReference type="FunFam" id="3.40.50.720:FF:000208">
    <property type="entry name" value="Prephenate dehydrogenase"/>
    <property type="match status" value="1"/>
</dbReference>
<dbReference type="Gene3D" id="1.10.3660.10">
    <property type="entry name" value="6-phosphogluconate dehydrogenase C-terminal like domain"/>
    <property type="match status" value="1"/>
</dbReference>
<dbReference type="Gene3D" id="3.40.50.720">
    <property type="entry name" value="NAD(P)-binding Rossmann-like Domain"/>
    <property type="match status" value="1"/>
</dbReference>
<dbReference type="InterPro" id="IPR008927">
    <property type="entry name" value="6-PGluconate_DH-like_C_sf"/>
</dbReference>
<dbReference type="InterPro" id="IPR045865">
    <property type="entry name" value="ACT-like_dom_sf"/>
</dbReference>
<dbReference type="InterPro" id="IPR002912">
    <property type="entry name" value="ACT_dom"/>
</dbReference>
<dbReference type="InterPro" id="IPR036291">
    <property type="entry name" value="NAD(P)-bd_dom_sf"/>
</dbReference>
<dbReference type="InterPro" id="IPR046825">
    <property type="entry name" value="PDH_C"/>
</dbReference>
<dbReference type="InterPro" id="IPR046826">
    <property type="entry name" value="PDH_N"/>
</dbReference>
<dbReference type="InterPro" id="IPR050812">
    <property type="entry name" value="Preph/Arog_dehydrog"/>
</dbReference>
<dbReference type="InterPro" id="IPR003099">
    <property type="entry name" value="Prephen_DH"/>
</dbReference>
<dbReference type="NCBIfam" id="NF005106">
    <property type="entry name" value="PRK06545.1-4"/>
    <property type="match status" value="1"/>
</dbReference>
<dbReference type="NCBIfam" id="NF005107">
    <property type="entry name" value="PRK06545.1-5"/>
    <property type="match status" value="1"/>
</dbReference>
<dbReference type="PANTHER" id="PTHR21363">
    <property type="entry name" value="PREPHENATE DEHYDROGENASE"/>
    <property type="match status" value="1"/>
</dbReference>
<dbReference type="PANTHER" id="PTHR21363:SF0">
    <property type="entry name" value="PREPHENATE DEHYDROGENASE [NADP(+)]"/>
    <property type="match status" value="1"/>
</dbReference>
<dbReference type="Pfam" id="PF20463">
    <property type="entry name" value="PDH_C"/>
    <property type="match status" value="1"/>
</dbReference>
<dbReference type="Pfam" id="PF02153">
    <property type="entry name" value="PDH_N"/>
    <property type="match status" value="1"/>
</dbReference>
<dbReference type="SUPFAM" id="SSF48179">
    <property type="entry name" value="6-phosphogluconate dehydrogenase C-terminal domain-like"/>
    <property type="match status" value="1"/>
</dbReference>
<dbReference type="SUPFAM" id="SSF55021">
    <property type="entry name" value="ACT-like"/>
    <property type="match status" value="1"/>
</dbReference>
<dbReference type="SUPFAM" id="SSF51735">
    <property type="entry name" value="NAD(P)-binding Rossmann-fold domains"/>
    <property type="match status" value="1"/>
</dbReference>
<dbReference type="PROSITE" id="PS51671">
    <property type="entry name" value="ACT"/>
    <property type="match status" value="1"/>
</dbReference>
<dbReference type="PROSITE" id="PS51176">
    <property type="entry name" value="PDH_ADH"/>
    <property type="match status" value="1"/>
</dbReference>
<gene>
    <name type="primary">tyrA</name>
    <name type="ordered locus">SA1197</name>
</gene>
<sequence>MTTVLFVGLGLIGGSLASNIKYHNPNTNIIAYDADTSQLDKAKSIGIINEKCLNYSEAIKKADVIIYATPVAITNKYLSELIDMPTKPGVIVSDTGSTKAMIQQHESNLLKHNIHLVSGHPMAGSHKSGVLNAKKHLFENAYYILVYNEPRNEQAANTLKELLSPTLAKFIVTTAEEHDYVTSVVSHLPHIVASSLVHVSQKNGQEHHLVNKLAAGGFRDITRIASSNAQMWKDITLSNKTYILEMIRQLKSQFQDLERLIESNDSEKLLSFFAQAKSYRDALPAKQLGGLNTAYDLYVDIPDESGMISKVTYIMSLHNISISNLRILEVREDIYGALKISFKNPTDRERGMQALSDFDCYIQ</sequence>
<evidence type="ECO:0000255" key="1"/>
<evidence type="ECO:0000255" key="2">
    <source>
        <dbReference type="PROSITE-ProRule" id="PRU00522"/>
    </source>
</evidence>
<evidence type="ECO:0000255" key="3">
    <source>
        <dbReference type="PROSITE-ProRule" id="PRU01007"/>
    </source>
</evidence>
<evidence type="ECO:0000305" key="4"/>
<keyword id="KW-0028">Amino-acid biosynthesis</keyword>
<keyword id="KW-0057">Aromatic amino acid biosynthesis</keyword>
<keyword id="KW-0520">NAD</keyword>
<keyword id="KW-0560">Oxidoreductase</keyword>
<keyword id="KW-0827">Tyrosine biosynthesis</keyword>
<name>TYRA_STAAN</name>
<comment type="catalytic activity">
    <reaction>
        <text>prephenate + NAD(+) = 3-(4-hydroxyphenyl)pyruvate + CO2 + NADH</text>
        <dbReference type="Rhea" id="RHEA:13869"/>
        <dbReference type="ChEBI" id="CHEBI:16526"/>
        <dbReference type="ChEBI" id="CHEBI:29934"/>
        <dbReference type="ChEBI" id="CHEBI:36242"/>
        <dbReference type="ChEBI" id="CHEBI:57540"/>
        <dbReference type="ChEBI" id="CHEBI:57945"/>
        <dbReference type="EC" id="1.3.1.12"/>
    </reaction>
</comment>
<comment type="pathway">
    <text>Amino-acid biosynthesis; L-tyrosine biosynthesis; (4-hydroxyphenyl)pyruvate from prephenate (NAD(+) route): step 1/1.</text>
</comment>
<comment type="similarity">
    <text evidence="4">Belongs to the prephenate/arogenate dehydrogenase family.</text>
</comment>
<protein>
    <recommendedName>
        <fullName>Prephenate dehydrogenase</fullName>
        <shortName>PDH</shortName>
        <ecNumber>1.3.1.12</ecNumber>
    </recommendedName>
</protein>